<organism>
    <name type="scientific">Saccharolobus islandicus (strain M.14.25 / Kamchatka #1)</name>
    <name type="common">Sulfolobus islandicus</name>
    <dbReference type="NCBI Taxonomy" id="427317"/>
    <lineage>
        <taxon>Archaea</taxon>
        <taxon>Thermoproteota</taxon>
        <taxon>Thermoprotei</taxon>
        <taxon>Sulfolobales</taxon>
        <taxon>Sulfolobaceae</taxon>
        <taxon>Saccharolobus</taxon>
    </lineage>
</organism>
<comment type="similarity">
    <text evidence="1">Belongs to the UPF0200 family.</text>
</comment>
<gene>
    <name type="ordered locus">M1425_1180</name>
</gene>
<sequence>MSYLVVTIKVILITGMPGSGKSEFAKLLKERGAKVIVMSDVVRKRYSIEAKPGERLMDFAKRLREIYGDGVVARLCVEELGTSNHDLVVFDGVRSLAEVEEFKRLLGDSVYIVAVHSPPKIRYKRMIERLRSDDSKEISELIRRDREELKLGIGEVIAMADYIITNDSNYEEFKRRCEEVTDRVLKNG</sequence>
<name>Y1180_SACI4</name>
<feature type="chain" id="PRO_1000213578" description="UPF0200 protein M1425_1180">
    <location>
        <begin position="1"/>
        <end position="188"/>
    </location>
</feature>
<feature type="binding site" evidence="1">
    <location>
        <begin position="15"/>
        <end position="22"/>
    </location>
    <ligand>
        <name>ATP</name>
        <dbReference type="ChEBI" id="CHEBI:30616"/>
    </ligand>
</feature>
<evidence type="ECO:0000255" key="1">
    <source>
        <dbReference type="HAMAP-Rule" id="MF_01111"/>
    </source>
</evidence>
<reference key="1">
    <citation type="journal article" date="2009" name="Proc. Natl. Acad. Sci. U.S.A.">
        <title>Biogeography of the Sulfolobus islandicus pan-genome.</title>
        <authorList>
            <person name="Reno M.L."/>
            <person name="Held N.L."/>
            <person name="Fields C.J."/>
            <person name="Burke P.V."/>
            <person name="Whitaker R.J."/>
        </authorList>
    </citation>
    <scope>NUCLEOTIDE SEQUENCE [LARGE SCALE GENOMIC DNA]</scope>
    <source>
        <strain>M.14.25 / Kamchatka #1</strain>
    </source>
</reference>
<keyword id="KW-0067">ATP-binding</keyword>
<keyword id="KW-0547">Nucleotide-binding</keyword>
<proteinExistence type="inferred from homology"/>
<protein>
    <recommendedName>
        <fullName evidence="1">UPF0200 protein M1425_1180</fullName>
    </recommendedName>
</protein>
<dbReference type="EMBL" id="CP001400">
    <property type="protein sequence ID" value="ACP37941.1"/>
    <property type="molecule type" value="Genomic_DNA"/>
</dbReference>
<dbReference type="RefSeq" id="WP_009989191.1">
    <property type="nucleotide sequence ID" value="NC_012588.1"/>
</dbReference>
<dbReference type="SMR" id="C3MYG2"/>
<dbReference type="KEGG" id="sia:M1425_1180"/>
<dbReference type="HOGENOM" id="CLU_096329_1_0_2"/>
<dbReference type="Proteomes" id="UP000001350">
    <property type="component" value="Chromosome"/>
</dbReference>
<dbReference type="GO" id="GO:0005524">
    <property type="term" value="F:ATP binding"/>
    <property type="evidence" value="ECO:0007669"/>
    <property type="project" value="UniProtKB-UniRule"/>
</dbReference>
<dbReference type="CDD" id="cd02022">
    <property type="entry name" value="DPCK"/>
    <property type="match status" value="1"/>
</dbReference>
<dbReference type="Gene3D" id="3.40.50.300">
    <property type="entry name" value="P-loop containing nucleotide triphosphate hydrolases"/>
    <property type="match status" value="1"/>
</dbReference>
<dbReference type="HAMAP" id="MF_01111">
    <property type="entry name" value="UPF0200"/>
    <property type="match status" value="1"/>
</dbReference>
<dbReference type="InterPro" id="IPR022970">
    <property type="entry name" value="NTP_hydrolase-rel"/>
</dbReference>
<dbReference type="InterPro" id="IPR027417">
    <property type="entry name" value="P-loop_NTPase"/>
</dbReference>
<dbReference type="PANTHER" id="PTHR41930:SF1">
    <property type="entry name" value="DEPHOSPHO-COA KINASE"/>
    <property type="match status" value="1"/>
</dbReference>
<dbReference type="PANTHER" id="PTHR41930">
    <property type="entry name" value="UPF0200 PROTEIN MJ1399"/>
    <property type="match status" value="1"/>
</dbReference>
<dbReference type="Pfam" id="PF13238">
    <property type="entry name" value="AAA_18"/>
    <property type="match status" value="1"/>
</dbReference>
<dbReference type="SUPFAM" id="SSF52540">
    <property type="entry name" value="P-loop containing nucleoside triphosphate hydrolases"/>
    <property type="match status" value="1"/>
</dbReference>
<accession>C3MYG2</accession>